<organism>
    <name type="scientific">Polaromonas sp. (strain JS666 / ATCC BAA-500)</name>
    <dbReference type="NCBI Taxonomy" id="296591"/>
    <lineage>
        <taxon>Bacteria</taxon>
        <taxon>Pseudomonadati</taxon>
        <taxon>Pseudomonadota</taxon>
        <taxon>Betaproteobacteria</taxon>
        <taxon>Burkholderiales</taxon>
        <taxon>Comamonadaceae</taxon>
        <taxon>Polaromonas</taxon>
    </lineage>
</organism>
<name>NUOD_POLSJ</name>
<accession>Q127X5</accession>
<proteinExistence type="inferred from homology"/>
<sequence length="417" mass="47534">MAEIKNYTLNFGPQHPAAHGVLRLVLELDGEVIQRADPHIGLLHRATEKLAESKTYIQSLPYMDRLDYVSMMSNEQAYCLAIEKLLGVDVPIRAQYIRVMYAEITRLLNHLLWLGAHGFDCGAMNILIYCFREREALFDMYEAVSGARMHAAYFRPGGVYRDLPDTMPQYRVSKIKNAKAIAALNENRQGSLLDFIDDFVAKFPRLVDEYETLLTDNRIWKQRTVGVGVVSPERALNLGFTGPMLRGSGFAWDLRKQQPYDVYDRMDFDIPVGKTGDCYDRYLVRIEEMRQSNRIIKQCIDWLRVNPGPVITSNHKVAAPDRESMKTNMEELIHHFKLFTEGFHVPEGEAYAAVEHPKGEFGIYIVSDGANKPYRLKIRPPGFPHLAAMDEMSRGHMIADAVAVIGTMDIVFGEIDR</sequence>
<feature type="chain" id="PRO_0000371902" description="NADH-quinone oxidoreductase subunit D">
    <location>
        <begin position="1"/>
        <end position="417"/>
    </location>
</feature>
<reference key="1">
    <citation type="journal article" date="2008" name="Appl. Environ. Microbiol.">
        <title>The genome of Polaromonas sp. strain JS666: insights into the evolution of a hydrocarbon- and xenobiotic-degrading bacterium, and features of relevance to biotechnology.</title>
        <authorList>
            <person name="Mattes T.E."/>
            <person name="Alexander A.K."/>
            <person name="Richardson P.M."/>
            <person name="Munk A.C."/>
            <person name="Han C.S."/>
            <person name="Stothard P."/>
            <person name="Coleman N.V."/>
        </authorList>
    </citation>
    <scope>NUCLEOTIDE SEQUENCE [LARGE SCALE GENOMIC DNA]</scope>
    <source>
        <strain>JS666 / ATCC BAA-500</strain>
    </source>
</reference>
<keyword id="KW-0997">Cell inner membrane</keyword>
<keyword id="KW-1003">Cell membrane</keyword>
<keyword id="KW-0472">Membrane</keyword>
<keyword id="KW-0520">NAD</keyword>
<keyword id="KW-0874">Quinone</keyword>
<keyword id="KW-1185">Reference proteome</keyword>
<keyword id="KW-1278">Translocase</keyword>
<keyword id="KW-0813">Transport</keyword>
<keyword id="KW-0830">Ubiquinone</keyword>
<protein>
    <recommendedName>
        <fullName evidence="1">NADH-quinone oxidoreductase subunit D</fullName>
        <ecNumber evidence="1">7.1.1.-</ecNumber>
    </recommendedName>
    <alternativeName>
        <fullName evidence="1">NADH dehydrogenase I subunit D</fullName>
    </alternativeName>
    <alternativeName>
        <fullName evidence="1">NDH-1 subunit D</fullName>
    </alternativeName>
</protein>
<dbReference type="EC" id="7.1.1.-" evidence="1"/>
<dbReference type="EMBL" id="CP000316">
    <property type="protein sequence ID" value="ABE45167.1"/>
    <property type="molecule type" value="Genomic_DNA"/>
</dbReference>
<dbReference type="RefSeq" id="WP_011484162.1">
    <property type="nucleotide sequence ID" value="NC_007948.1"/>
</dbReference>
<dbReference type="SMR" id="Q127X5"/>
<dbReference type="STRING" id="296591.Bpro_3253"/>
<dbReference type="KEGG" id="pol:Bpro_3253"/>
<dbReference type="eggNOG" id="COG0649">
    <property type="taxonomic scope" value="Bacteria"/>
</dbReference>
<dbReference type="HOGENOM" id="CLU_015134_1_1_4"/>
<dbReference type="OrthoDB" id="9801496at2"/>
<dbReference type="Proteomes" id="UP000001983">
    <property type="component" value="Chromosome"/>
</dbReference>
<dbReference type="GO" id="GO:0005886">
    <property type="term" value="C:plasma membrane"/>
    <property type="evidence" value="ECO:0007669"/>
    <property type="project" value="UniProtKB-SubCell"/>
</dbReference>
<dbReference type="GO" id="GO:0051287">
    <property type="term" value="F:NAD binding"/>
    <property type="evidence" value="ECO:0007669"/>
    <property type="project" value="InterPro"/>
</dbReference>
<dbReference type="GO" id="GO:0050136">
    <property type="term" value="F:NADH:ubiquinone reductase (non-electrogenic) activity"/>
    <property type="evidence" value="ECO:0007669"/>
    <property type="project" value="UniProtKB-UniRule"/>
</dbReference>
<dbReference type="GO" id="GO:0048038">
    <property type="term" value="F:quinone binding"/>
    <property type="evidence" value="ECO:0007669"/>
    <property type="project" value="UniProtKB-KW"/>
</dbReference>
<dbReference type="FunFam" id="1.10.645.10:FF:000005">
    <property type="entry name" value="NADH-quinone oxidoreductase subunit D"/>
    <property type="match status" value="1"/>
</dbReference>
<dbReference type="Gene3D" id="1.10.645.10">
    <property type="entry name" value="Cytochrome-c3 Hydrogenase, chain B"/>
    <property type="match status" value="1"/>
</dbReference>
<dbReference type="HAMAP" id="MF_01358">
    <property type="entry name" value="NDH1_NuoD"/>
    <property type="match status" value="1"/>
</dbReference>
<dbReference type="InterPro" id="IPR001135">
    <property type="entry name" value="NADH_Q_OxRdtase_suD"/>
</dbReference>
<dbReference type="InterPro" id="IPR014029">
    <property type="entry name" value="NADH_UbQ_OxRdtase_49kDa_CS"/>
</dbReference>
<dbReference type="InterPro" id="IPR022885">
    <property type="entry name" value="NDH1_su_D/H"/>
</dbReference>
<dbReference type="InterPro" id="IPR029014">
    <property type="entry name" value="NiFe-Hase_large"/>
</dbReference>
<dbReference type="NCBIfam" id="TIGR01962">
    <property type="entry name" value="NuoD"/>
    <property type="match status" value="1"/>
</dbReference>
<dbReference type="NCBIfam" id="NF004739">
    <property type="entry name" value="PRK06075.1"/>
    <property type="match status" value="1"/>
</dbReference>
<dbReference type="PANTHER" id="PTHR11993:SF10">
    <property type="entry name" value="NADH DEHYDROGENASE [UBIQUINONE] IRON-SULFUR PROTEIN 2, MITOCHONDRIAL"/>
    <property type="match status" value="1"/>
</dbReference>
<dbReference type="PANTHER" id="PTHR11993">
    <property type="entry name" value="NADH-UBIQUINONE OXIDOREDUCTASE 49 KDA SUBUNIT"/>
    <property type="match status" value="1"/>
</dbReference>
<dbReference type="Pfam" id="PF00346">
    <property type="entry name" value="Complex1_49kDa"/>
    <property type="match status" value="1"/>
</dbReference>
<dbReference type="SUPFAM" id="SSF56762">
    <property type="entry name" value="HydB/Nqo4-like"/>
    <property type="match status" value="1"/>
</dbReference>
<dbReference type="PROSITE" id="PS00535">
    <property type="entry name" value="COMPLEX1_49K"/>
    <property type="match status" value="1"/>
</dbReference>
<comment type="function">
    <text evidence="1">NDH-1 shuttles electrons from NADH, via FMN and iron-sulfur (Fe-S) centers, to quinones in the respiratory chain. The immediate electron acceptor for the enzyme in this species is believed to be ubiquinone. Couples the redox reaction to proton translocation (for every two electrons transferred, four hydrogen ions are translocated across the cytoplasmic membrane), and thus conserves the redox energy in a proton gradient.</text>
</comment>
<comment type="catalytic activity">
    <reaction evidence="1">
        <text>a quinone + NADH + 5 H(+)(in) = a quinol + NAD(+) + 4 H(+)(out)</text>
        <dbReference type="Rhea" id="RHEA:57888"/>
        <dbReference type="ChEBI" id="CHEBI:15378"/>
        <dbReference type="ChEBI" id="CHEBI:24646"/>
        <dbReference type="ChEBI" id="CHEBI:57540"/>
        <dbReference type="ChEBI" id="CHEBI:57945"/>
        <dbReference type="ChEBI" id="CHEBI:132124"/>
    </reaction>
</comment>
<comment type="subunit">
    <text evidence="1">NDH-1 is composed of 14 different subunits. Subunits NuoB, C, D, E, F, and G constitute the peripheral sector of the complex.</text>
</comment>
<comment type="subcellular location">
    <subcellularLocation>
        <location evidence="1">Cell inner membrane</location>
        <topology evidence="1">Peripheral membrane protein</topology>
        <orientation evidence="1">Cytoplasmic side</orientation>
    </subcellularLocation>
</comment>
<comment type="similarity">
    <text evidence="1">Belongs to the complex I 49 kDa subunit family.</text>
</comment>
<gene>
    <name evidence="1" type="primary">nuoD</name>
    <name type="ordered locus">Bpro_3253</name>
</gene>
<evidence type="ECO:0000255" key="1">
    <source>
        <dbReference type="HAMAP-Rule" id="MF_01358"/>
    </source>
</evidence>